<accession>Q2MID2</accession>
<name>NU1C_SOLBU</name>
<protein>
    <recommendedName>
        <fullName evidence="1">NAD(P)H-quinone oxidoreductase subunit 1, chloroplastic</fullName>
        <ecNumber evidence="1">7.1.1.-</ecNumber>
    </recommendedName>
    <alternativeName>
        <fullName evidence="1">NAD(P)H dehydrogenase subunit 1</fullName>
        <shortName evidence="1">NDH subunit 1</shortName>
    </alternativeName>
    <alternativeName>
        <fullName evidence="1">NADH-plastoquinone oxidoreductase subunit 1</fullName>
    </alternativeName>
</protein>
<dbReference type="EC" id="7.1.1.-" evidence="1"/>
<dbReference type="EMBL" id="DQ347958">
    <property type="protein sequence ID" value="ABC56269.1"/>
    <property type="molecule type" value="Genomic_DNA"/>
</dbReference>
<dbReference type="RefSeq" id="YP_538905.1">
    <property type="nucleotide sequence ID" value="NC_007943.1"/>
</dbReference>
<dbReference type="SMR" id="Q2MID2"/>
<dbReference type="GeneID" id="3989469"/>
<dbReference type="GO" id="GO:0009535">
    <property type="term" value="C:chloroplast thylakoid membrane"/>
    <property type="evidence" value="ECO:0007669"/>
    <property type="project" value="UniProtKB-SubCell"/>
</dbReference>
<dbReference type="GO" id="GO:0003954">
    <property type="term" value="F:NADH dehydrogenase activity"/>
    <property type="evidence" value="ECO:0007669"/>
    <property type="project" value="TreeGrafter"/>
</dbReference>
<dbReference type="GO" id="GO:0016655">
    <property type="term" value="F:oxidoreductase activity, acting on NAD(P)H, quinone or similar compound as acceptor"/>
    <property type="evidence" value="ECO:0007669"/>
    <property type="project" value="UniProtKB-UniRule"/>
</dbReference>
<dbReference type="GO" id="GO:0048038">
    <property type="term" value="F:quinone binding"/>
    <property type="evidence" value="ECO:0007669"/>
    <property type="project" value="UniProtKB-KW"/>
</dbReference>
<dbReference type="GO" id="GO:0009060">
    <property type="term" value="P:aerobic respiration"/>
    <property type="evidence" value="ECO:0007669"/>
    <property type="project" value="TreeGrafter"/>
</dbReference>
<dbReference type="GO" id="GO:0019684">
    <property type="term" value="P:photosynthesis, light reaction"/>
    <property type="evidence" value="ECO:0007669"/>
    <property type="project" value="UniProtKB-UniRule"/>
</dbReference>
<dbReference type="HAMAP" id="MF_01350">
    <property type="entry name" value="NDH1_NuoH"/>
    <property type="match status" value="1"/>
</dbReference>
<dbReference type="InterPro" id="IPR001694">
    <property type="entry name" value="NADH_UbQ_OxRdtase_su1/FPO"/>
</dbReference>
<dbReference type="InterPro" id="IPR018086">
    <property type="entry name" value="NADH_UbQ_OxRdtase_su1_CS"/>
</dbReference>
<dbReference type="NCBIfam" id="NF004741">
    <property type="entry name" value="PRK06076.1-2"/>
    <property type="match status" value="1"/>
</dbReference>
<dbReference type="PANTHER" id="PTHR11432">
    <property type="entry name" value="NADH DEHYDROGENASE SUBUNIT 1"/>
    <property type="match status" value="1"/>
</dbReference>
<dbReference type="PANTHER" id="PTHR11432:SF3">
    <property type="entry name" value="NADH-UBIQUINONE OXIDOREDUCTASE CHAIN 1"/>
    <property type="match status" value="1"/>
</dbReference>
<dbReference type="Pfam" id="PF00146">
    <property type="entry name" value="NADHdh"/>
    <property type="match status" value="1"/>
</dbReference>
<dbReference type="PROSITE" id="PS00667">
    <property type="entry name" value="COMPLEX1_ND1_1"/>
    <property type="match status" value="1"/>
</dbReference>
<dbReference type="PROSITE" id="PS00668">
    <property type="entry name" value="COMPLEX1_ND1_2"/>
    <property type="match status" value="1"/>
</dbReference>
<comment type="function">
    <text evidence="1">NDH shuttles electrons from NAD(P)H:plastoquinone, via FMN and iron-sulfur (Fe-S) centers, to quinones in the photosynthetic chain and possibly in a chloroplast respiratory chain. The immediate electron acceptor for the enzyme in this species is believed to be plastoquinone. Couples the redox reaction to proton translocation, and thus conserves the redox energy in a proton gradient.</text>
</comment>
<comment type="catalytic activity">
    <reaction evidence="1">
        <text>a plastoquinone + NADH + (n+1) H(+)(in) = a plastoquinol + NAD(+) + n H(+)(out)</text>
        <dbReference type="Rhea" id="RHEA:42608"/>
        <dbReference type="Rhea" id="RHEA-COMP:9561"/>
        <dbReference type="Rhea" id="RHEA-COMP:9562"/>
        <dbReference type="ChEBI" id="CHEBI:15378"/>
        <dbReference type="ChEBI" id="CHEBI:17757"/>
        <dbReference type="ChEBI" id="CHEBI:57540"/>
        <dbReference type="ChEBI" id="CHEBI:57945"/>
        <dbReference type="ChEBI" id="CHEBI:62192"/>
    </reaction>
</comment>
<comment type="catalytic activity">
    <reaction evidence="1">
        <text>a plastoquinone + NADPH + (n+1) H(+)(in) = a plastoquinol + NADP(+) + n H(+)(out)</text>
        <dbReference type="Rhea" id="RHEA:42612"/>
        <dbReference type="Rhea" id="RHEA-COMP:9561"/>
        <dbReference type="Rhea" id="RHEA-COMP:9562"/>
        <dbReference type="ChEBI" id="CHEBI:15378"/>
        <dbReference type="ChEBI" id="CHEBI:17757"/>
        <dbReference type="ChEBI" id="CHEBI:57783"/>
        <dbReference type="ChEBI" id="CHEBI:58349"/>
        <dbReference type="ChEBI" id="CHEBI:62192"/>
    </reaction>
</comment>
<comment type="subunit">
    <text evidence="1">NDH is composed of at least 16 different subunits, 5 of which are encoded in the nucleus.</text>
</comment>
<comment type="subcellular location">
    <subcellularLocation>
        <location evidence="1">Plastid</location>
        <location evidence="1">Chloroplast thylakoid membrane</location>
        <topology evidence="1">Multi-pass membrane protein</topology>
    </subcellularLocation>
</comment>
<comment type="similarity">
    <text evidence="1">Belongs to the complex I subunit 1 family.</text>
</comment>
<reference key="1">
    <citation type="journal article" date="2006" name="Theor. Appl. Genet.">
        <title>Complete chloroplast genome sequences of Solanum bulbocastanum, Solanum lycopersicum and comparative analyses with other Solanaceae genomes.</title>
        <authorList>
            <person name="Daniell H."/>
            <person name="Lee S.-B."/>
            <person name="Grevich J."/>
            <person name="Saski C."/>
            <person name="Quesada-Vargas T."/>
            <person name="Guda C."/>
            <person name="Tomkins J."/>
            <person name="Jansen R.K."/>
        </authorList>
    </citation>
    <scope>NUCLEOTIDE SEQUENCE [LARGE SCALE GENOMIC DNA]</scope>
    <source>
        <strain>cv. PT29</strain>
    </source>
</reference>
<keyword id="KW-0150">Chloroplast</keyword>
<keyword id="KW-0472">Membrane</keyword>
<keyword id="KW-0520">NAD</keyword>
<keyword id="KW-0521">NADP</keyword>
<keyword id="KW-0934">Plastid</keyword>
<keyword id="KW-0618">Plastoquinone</keyword>
<keyword id="KW-0874">Quinone</keyword>
<keyword id="KW-0793">Thylakoid</keyword>
<keyword id="KW-1278">Translocase</keyword>
<keyword id="KW-0812">Transmembrane</keyword>
<keyword id="KW-1133">Transmembrane helix</keyword>
<gene>
    <name evidence="1" type="primary">ndhA</name>
</gene>
<evidence type="ECO:0000255" key="1">
    <source>
        <dbReference type="HAMAP-Rule" id="MF_01350"/>
    </source>
</evidence>
<geneLocation type="chloroplast"/>
<feature type="chain" id="PRO_0000240199" description="NAD(P)H-quinone oxidoreductase subunit 1, chloroplastic">
    <location>
        <begin position="1"/>
        <end position="363"/>
    </location>
</feature>
<feature type="transmembrane region" description="Helical" evidence="1">
    <location>
        <begin position="30"/>
        <end position="50"/>
    </location>
</feature>
<feature type="transmembrane region" description="Helical" evidence="1">
    <location>
        <begin position="98"/>
        <end position="118"/>
    </location>
</feature>
<feature type="transmembrane region" description="Helical" evidence="1">
    <location>
        <begin position="127"/>
        <end position="147"/>
    </location>
</feature>
<feature type="transmembrane region" description="Helical" evidence="1">
    <location>
        <begin position="165"/>
        <end position="185"/>
    </location>
</feature>
<feature type="transmembrane region" description="Helical" evidence="1">
    <location>
        <begin position="203"/>
        <end position="223"/>
    </location>
</feature>
<feature type="transmembrane region" description="Helical" evidence="1">
    <location>
        <begin position="248"/>
        <end position="268"/>
    </location>
</feature>
<feature type="transmembrane region" description="Helical" evidence="1">
    <location>
        <begin position="300"/>
        <end position="320"/>
    </location>
</feature>
<feature type="transmembrane region" description="Helical" evidence="1">
    <location>
        <begin position="336"/>
        <end position="356"/>
    </location>
</feature>
<proteinExistence type="inferred from homology"/>
<sequence length="363" mass="39927">MIIDTTEIETINSFSKLESLKEVYGIIWMLVPIVTLVLGITIGVLVIVWLEREISAGIQQRIGPEYAGPLGILQALADGTKLLLKENLIPSTGDTRLFSIGPSIAVISIFLSYSVIPFGDHLVLADLSIGVFFWIAISSIAPVGLLMSGYGSNNKYSFLGGLRAAAQSISYEIPLALCVLSISLLSNSSSTVDIVEAQSKYGFWGWNLWRQPIGFIVFLISSLAECERLPFDLPEAEEELVAGYQTEYSGIKFGLFYIASYLNLLVSSLFVTVLYLGGWNLSIPYIFVPELFGINKGGKVFGTLIGIFITLAKTYLFLFIPIATRWTLPRLRMDQLLNLGWKFLLPISLGNLLLTTSSQLLSL</sequence>
<organism>
    <name type="scientific">Solanum bulbocastanum</name>
    <name type="common">Wild potato</name>
    <dbReference type="NCBI Taxonomy" id="147425"/>
    <lineage>
        <taxon>Eukaryota</taxon>
        <taxon>Viridiplantae</taxon>
        <taxon>Streptophyta</taxon>
        <taxon>Embryophyta</taxon>
        <taxon>Tracheophyta</taxon>
        <taxon>Spermatophyta</taxon>
        <taxon>Magnoliopsida</taxon>
        <taxon>eudicotyledons</taxon>
        <taxon>Gunneridae</taxon>
        <taxon>Pentapetalae</taxon>
        <taxon>asterids</taxon>
        <taxon>lamiids</taxon>
        <taxon>Solanales</taxon>
        <taxon>Solanaceae</taxon>
        <taxon>Solanoideae</taxon>
        <taxon>Solaneae</taxon>
        <taxon>Solanum</taxon>
    </lineage>
</organism>